<proteinExistence type="inferred from homology"/>
<accession>Q8PHY1</accession>
<comment type="function">
    <text evidence="1">Catalyzes the cross-linking of a glutamate residue and a tyrosine residue in the PqqA protein as part of the biosynthesis of pyrroloquinoline quinone (PQQ).</text>
</comment>
<comment type="catalytic activity">
    <reaction evidence="1">
        <text>[PQQ precursor protein] + S-adenosyl-L-methionine = E-Y cross-linked-[PQQ precursor protein] + 5'-deoxyadenosine + L-methionine + H(+)</text>
        <dbReference type="Rhea" id="RHEA:56836"/>
        <dbReference type="Rhea" id="RHEA-COMP:14800"/>
        <dbReference type="Rhea" id="RHEA-COMP:14801"/>
        <dbReference type="ChEBI" id="CHEBI:15378"/>
        <dbReference type="ChEBI" id="CHEBI:17319"/>
        <dbReference type="ChEBI" id="CHEBI:57844"/>
        <dbReference type="ChEBI" id="CHEBI:59789"/>
        <dbReference type="ChEBI" id="CHEBI:141026"/>
        <dbReference type="ChEBI" id="CHEBI:141027"/>
        <dbReference type="EC" id="1.21.98.4"/>
    </reaction>
</comment>
<comment type="cofactor">
    <cofactor evidence="1">
        <name>[4Fe-4S] cluster</name>
        <dbReference type="ChEBI" id="CHEBI:49883"/>
    </cofactor>
    <text evidence="1">Binds 1 [4Fe-4S] cluster. The cluster is coordinated with 3 cysteines and an exchangeable S-adenosyl-L-methionine.</text>
</comment>
<comment type="pathway">
    <text evidence="1">Cofactor biosynthesis; pyrroloquinoline quinone biosynthesis.</text>
</comment>
<comment type="subunit">
    <text evidence="1">Interacts with PqqD. The interaction is necessary for activity of PqqE.</text>
</comment>
<comment type="similarity">
    <text evidence="1">Belongs to the radical SAM superfamily. PqqE family.</text>
</comment>
<gene>
    <name evidence="1" type="primary">pqqE</name>
    <name type="ordered locus">XAC3117</name>
</gene>
<sequence>MSIAPPPLSVLLELTHRCPLACPYCSNPIALAALREEMDTAGWRSLLQQAADMGVLQAHFSGGEPMLRKDLPELVAHARALGLYSNLITSGVAGGEPMLDQLQAAGLEHVQLSVQDVDPAGADRIAGYRNSLSRKREFAAAVRARGLPLTINAVLHRHNAERVPGMIALALEWQAERIEVAHTQYYGWGLRNRAALMPSREQLLATIDAVETARRQLGDRLAIDFVTPDYYARQPKPCMGGWGQRFVNISPRGDVLPCHAAETIEGMRFDNLRERSLADIWNNGEAFVRFRGTAWMPEVCQGCPKREIDWGGCRCQALALSGDAATLDPVCERSPIHAQVRAAAEQESASPAPAFVYRRPERLAPAAADMLE</sequence>
<reference key="1">
    <citation type="journal article" date="2002" name="Nature">
        <title>Comparison of the genomes of two Xanthomonas pathogens with differing host specificities.</title>
        <authorList>
            <person name="da Silva A.C.R."/>
            <person name="Ferro J.A."/>
            <person name="Reinach F.C."/>
            <person name="Farah C.S."/>
            <person name="Furlan L.R."/>
            <person name="Quaggio R.B."/>
            <person name="Monteiro-Vitorello C.B."/>
            <person name="Van Sluys M.A."/>
            <person name="Almeida N.F. Jr."/>
            <person name="Alves L.M.C."/>
            <person name="do Amaral A.M."/>
            <person name="Bertolini M.C."/>
            <person name="Camargo L.E.A."/>
            <person name="Camarotte G."/>
            <person name="Cannavan F."/>
            <person name="Cardozo J."/>
            <person name="Chambergo F."/>
            <person name="Ciapina L.P."/>
            <person name="Cicarelli R.M.B."/>
            <person name="Coutinho L.L."/>
            <person name="Cursino-Santos J.R."/>
            <person name="El-Dorry H."/>
            <person name="Faria J.B."/>
            <person name="Ferreira A.J.S."/>
            <person name="Ferreira R.C.C."/>
            <person name="Ferro M.I.T."/>
            <person name="Formighieri E.F."/>
            <person name="Franco M.C."/>
            <person name="Greggio C.C."/>
            <person name="Gruber A."/>
            <person name="Katsuyama A.M."/>
            <person name="Kishi L.T."/>
            <person name="Leite R.P."/>
            <person name="Lemos E.G.M."/>
            <person name="Lemos M.V.F."/>
            <person name="Locali E.C."/>
            <person name="Machado M.A."/>
            <person name="Madeira A.M.B.N."/>
            <person name="Martinez-Rossi N.M."/>
            <person name="Martins E.C."/>
            <person name="Meidanis J."/>
            <person name="Menck C.F.M."/>
            <person name="Miyaki C.Y."/>
            <person name="Moon D.H."/>
            <person name="Moreira L.M."/>
            <person name="Novo M.T.M."/>
            <person name="Okura V.K."/>
            <person name="Oliveira M.C."/>
            <person name="Oliveira V.R."/>
            <person name="Pereira H.A."/>
            <person name="Rossi A."/>
            <person name="Sena J.A.D."/>
            <person name="Silva C."/>
            <person name="de Souza R.F."/>
            <person name="Spinola L.A.F."/>
            <person name="Takita M.A."/>
            <person name="Tamura R.E."/>
            <person name="Teixeira E.C."/>
            <person name="Tezza R.I.D."/>
            <person name="Trindade dos Santos M."/>
            <person name="Truffi D."/>
            <person name="Tsai S.M."/>
            <person name="White F.F."/>
            <person name="Setubal J.C."/>
            <person name="Kitajima J.P."/>
        </authorList>
    </citation>
    <scope>NUCLEOTIDE SEQUENCE [LARGE SCALE GENOMIC DNA]</scope>
    <source>
        <strain>306</strain>
    </source>
</reference>
<evidence type="ECO:0000255" key="1">
    <source>
        <dbReference type="HAMAP-Rule" id="MF_00660"/>
    </source>
</evidence>
<evidence type="ECO:0000255" key="2">
    <source>
        <dbReference type="PROSITE-ProRule" id="PRU01266"/>
    </source>
</evidence>
<feature type="chain" id="PRO_0000219954" description="PqqA peptide cyclase">
    <location>
        <begin position="1"/>
        <end position="372"/>
    </location>
</feature>
<feature type="domain" description="Radical SAM core" evidence="2">
    <location>
        <begin position="4"/>
        <end position="220"/>
    </location>
</feature>
<feature type="binding site" evidence="1">
    <location>
        <position position="18"/>
    </location>
    <ligand>
        <name>[4Fe-4S] cluster</name>
        <dbReference type="ChEBI" id="CHEBI:49883"/>
        <note>4Fe-4S-S-AdoMet</note>
    </ligand>
</feature>
<feature type="binding site" evidence="1">
    <location>
        <position position="22"/>
    </location>
    <ligand>
        <name>[4Fe-4S] cluster</name>
        <dbReference type="ChEBI" id="CHEBI:49883"/>
        <note>4Fe-4S-S-AdoMet</note>
    </ligand>
</feature>
<feature type="binding site" evidence="1">
    <location>
        <position position="25"/>
    </location>
    <ligand>
        <name>[4Fe-4S] cluster</name>
        <dbReference type="ChEBI" id="CHEBI:49883"/>
        <note>4Fe-4S-S-AdoMet</note>
    </ligand>
</feature>
<protein>
    <recommendedName>
        <fullName evidence="1">PqqA peptide cyclase</fullName>
        <ecNumber evidence="1">1.21.98.4</ecNumber>
    </recommendedName>
    <alternativeName>
        <fullName evidence="1">Coenzyme PQQ synthesis protein E</fullName>
    </alternativeName>
    <alternativeName>
        <fullName evidence="1">Pyrroloquinoline quinone biosynthesis protein E</fullName>
    </alternativeName>
</protein>
<name>PQQE_XANAC</name>
<keyword id="KW-0004">4Fe-4S</keyword>
<keyword id="KW-0408">Iron</keyword>
<keyword id="KW-0411">Iron-sulfur</keyword>
<keyword id="KW-0479">Metal-binding</keyword>
<keyword id="KW-0560">Oxidoreductase</keyword>
<keyword id="KW-0884">PQQ biosynthesis</keyword>
<keyword id="KW-0949">S-adenosyl-L-methionine</keyword>
<dbReference type="EC" id="1.21.98.4" evidence="1"/>
<dbReference type="EMBL" id="AE008923">
    <property type="protein sequence ID" value="AAM37962.1"/>
    <property type="molecule type" value="Genomic_DNA"/>
</dbReference>
<dbReference type="RefSeq" id="WP_003482516.1">
    <property type="nucleotide sequence ID" value="NC_003919.1"/>
</dbReference>
<dbReference type="SMR" id="Q8PHY1"/>
<dbReference type="GeneID" id="66912184"/>
<dbReference type="KEGG" id="xac:XAC3117"/>
<dbReference type="eggNOG" id="COG0535">
    <property type="taxonomic scope" value="Bacteria"/>
</dbReference>
<dbReference type="HOGENOM" id="CLU_009273_4_7_6"/>
<dbReference type="UniPathway" id="UPA00539"/>
<dbReference type="Proteomes" id="UP000000576">
    <property type="component" value="Chromosome"/>
</dbReference>
<dbReference type="GO" id="GO:0051539">
    <property type="term" value="F:4 iron, 4 sulfur cluster binding"/>
    <property type="evidence" value="ECO:0007669"/>
    <property type="project" value="UniProtKB-KW"/>
</dbReference>
<dbReference type="GO" id="GO:0009975">
    <property type="term" value="F:cyclase activity"/>
    <property type="evidence" value="ECO:0007669"/>
    <property type="project" value="UniProtKB-UniRule"/>
</dbReference>
<dbReference type="GO" id="GO:0005506">
    <property type="term" value="F:iron ion binding"/>
    <property type="evidence" value="ECO:0007669"/>
    <property type="project" value="UniProtKB-UniRule"/>
</dbReference>
<dbReference type="GO" id="GO:0016491">
    <property type="term" value="F:oxidoreductase activity"/>
    <property type="evidence" value="ECO:0007669"/>
    <property type="project" value="UniProtKB-KW"/>
</dbReference>
<dbReference type="GO" id="GO:1904047">
    <property type="term" value="F:S-adenosyl-L-methionine binding"/>
    <property type="evidence" value="ECO:0007669"/>
    <property type="project" value="UniProtKB-UniRule"/>
</dbReference>
<dbReference type="GO" id="GO:0018189">
    <property type="term" value="P:pyrroloquinoline quinone biosynthetic process"/>
    <property type="evidence" value="ECO:0007669"/>
    <property type="project" value="UniProtKB-UniRule"/>
</dbReference>
<dbReference type="CDD" id="cd01335">
    <property type="entry name" value="Radical_SAM"/>
    <property type="match status" value="1"/>
</dbReference>
<dbReference type="CDD" id="cd21119">
    <property type="entry name" value="SPASM_PqqE"/>
    <property type="match status" value="1"/>
</dbReference>
<dbReference type="Gene3D" id="3.20.20.70">
    <property type="entry name" value="Aldolase class I"/>
    <property type="match status" value="1"/>
</dbReference>
<dbReference type="HAMAP" id="MF_00660">
    <property type="entry name" value="PqqE"/>
    <property type="match status" value="1"/>
</dbReference>
<dbReference type="InterPro" id="IPR023885">
    <property type="entry name" value="4Fe4S-binding_SPASM_dom"/>
</dbReference>
<dbReference type="InterPro" id="IPR013785">
    <property type="entry name" value="Aldolase_TIM"/>
</dbReference>
<dbReference type="InterPro" id="IPR011843">
    <property type="entry name" value="PQQ_synth_PqqE_bac"/>
</dbReference>
<dbReference type="InterPro" id="IPR017200">
    <property type="entry name" value="PqqE-like"/>
</dbReference>
<dbReference type="InterPro" id="IPR050377">
    <property type="entry name" value="Radical_SAM_PqqE_MftC-like"/>
</dbReference>
<dbReference type="InterPro" id="IPR007197">
    <property type="entry name" value="rSAM"/>
</dbReference>
<dbReference type="NCBIfam" id="TIGR02109">
    <property type="entry name" value="PQQ_syn_pqqE"/>
    <property type="match status" value="1"/>
</dbReference>
<dbReference type="NCBIfam" id="TIGR04085">
    <property type="entry name" value="rSAM_more_4Fe4S"/>
    <property type="match status" value="1"/>
</dbReference>
<dbReference type="PANTHER" id="PTHR11228:SF7">
    <property type="entry name" value="PQQA PEPTIDE CYCLASE"/>
    <property type="match status" value="1"/>
</dbReference>
<dbReference type="PANTHER" id="PTHR11228">
    <property type="entry name" value="RADICAL SAM DOMAIN PROTEIN"/>
    <property type="match status" value="1"/>
</dbReference>
<dbReference type="Pfam" id="PF04055">
    <property type="entry name" value="Radical_SAM"/>
    <property type="match status" value="1"/>
</dbReference>
<dbReference type="Pfam" id="PF13186">
    <property type="entry name" value="SPASM"/>
    <property type="match status" value="1"/>
</dbReference>
<dbReference type="PIRSF" id="PIRSF037420">
    <property type="entry name" value="PQQ_syn_pqqE"/>
    <property type="match status" value="1"/>
</dbReference>
<dbReference type="SFLD" id="SFLDF00280">
    <property type="entry name" value="coenzyme_PQQ_synthesis_protein"/>
    <property type="match status" value="1"/>
</dbReference>
<dbReference type="SFLD" id="SFLDG01067">
    <property type="entry name" value="SPASM/twitch_domain_containing"/>
    <property type="match status" value="1"/>
</dbReference>
<dbReference type="SUPFAM" id="SSF102114">
    <property type="entry name" value="Radical SAM enzymes"/>
    <property type="match status" value="1"/>
</dbReference>
<dbReference type="PROSITE" id="PS51918">
    <property type="entry name" value="RADICAL_SAM"/>
    <property type="match status" value="1"/>
</dbReference>
<organism>
    <name type="scientific">Xanthomonas axonopodis pv. citri (strain 306)</name>
    <dbReference type="NCBI Taxonomy" id="190486"/>
    <lineage>
        <taxon>Bacteria</taxon>
        <taxon>Pseudomonadati</taxon>
        <taxon>Pseudomonadota</taxon>
        <taxon>Gammaproteobacteria</taxon>
        <taxon>Lysobacterales</taxon>
        <taxon>Lysobacteraceae</taxon>
        <taxon>Xanthomonas</taxon>
    </lineage>
</organism>